<accession>Q09YH8</accession>
<keyword id="KW-0007">Acetylation</keyword>
<keyword id="KW-1003">Cell membrane</keyword>
<keyword id="KW-0333">Golgi apparatus</keyword>
<keyword id="KW-1017">Isopeptide bond</keyword>
<keyword id="KW-0449">Lipoprotein</keyword>
<keyword id="KW-0472">Membrane</keyword>
<keyword id="KW-0564">Palmitate</keyword>
<keyword id="KW-0597">Phosphoprotein</keyword>
<keyword id="KW-1185">Reference proteome</keyword>
<keyword id="KW-0832">Ubl conjugation</keyword>
<name>CAV1_SAIBB</name>
<proteinExistence type="inferred from homology"/>
<protein>
    <recommendedName>
        <fullName>Caveolin-1</fullName>
    </recommendedName>
</protein>
<gene>
    <name type="primary">CAV1</name>
</gene>
<feature type="initiator methionine" description="Removed" evidence="4">
    <location>
        <position position="1"/>
    </location>
</feature>
<feature type="chain" id="PRO_0000260374" description="Caveolin-1">
    <location>
        <begin position="2"/>
        <end position="178"/>
    </location>
</feature>
<feature type="topological domain" description="Cytoplasmic" evidence="6">
    <location>
        <begin position="2"/>
        <end position="104"/>
    </location>
</feature>
<feature type="intramembrane region" description="Helical" evidence="6">
    <location>
        <begin position="105"/>
        <end position="125"/>
    </location>
</feature>
<feature type="topological domain" description="Cytoplasmic" evidence="6">
    <location>
        <begin position="126"/>
        <end position="178"/>
    </location>
</feature>
<feature type="region of interest" description="Required for homooligomerization" evidence="4">
    <location>
        <begin position="2"/>
        <end position="94"/>
    </location>
</feature>
<feature type="region of interest" description="Interaction with CAVIN3" evidence="4">
    <location>
        <begin position="82"/>
        <end position="94"/>
    </location>
</feature>
<feature type="region of interest" description="Interacts with SPRY1, SPRY2, SPRY3 and SPRY4" evidence="3">
    <location>
        <begin position="131"/>
        <end position="142"/>
    </location>
</feature>
<feature type="region of interest" description="Interacts with SPRY1, SPRY2, and SPRY4" evidence="3">
    <location>
        <begin position="149"/>
        <end position="160"/>
    </location>
</feature>
<feature type="region of interest" description="Interacts with SPRY1, SPRY2, SPRY3 and SPRY4" evidence="3">
    <location>
        <begin position="167"/>
        <end position="178"/>
    </location>
</feature>
<feature type="modified residue" description="N-acetylserine" evidence="4">
    <location>
        <position position="2"/>
    </location>
</feature>
<feature type="modified residue" description="Phosphoserine" evidence="2">
    <location>
        <position position="2"/>
    </location>
</feature>
<feature type="modified residue" description="N6-acetyllysine; alternate" evidence="4">
    <location>
        <position position="5"/>
    </location>
</feature>
<feature type="modified residue" description="Phosphotyrosine" evidence="4">
    <location>
        <position position="6"/>
    </location>
</feature>
<feature type="modified residue" description="Phosphoserine" evidence="3">
    <location>
        <position position="9"/>
    </location>
</feature>
<feature type="modified residue" description="Phosphotyrosine; by ABL1" evidence="3">
    <location>
        <position position="14"/>
    </location>
</feature>
<feature type="modified residue" description="Phosphotyrosine" evidence="4">
    <location>
        <position position="25"/>
    </location>
</feature>
<feature type="modified residue" description="Phosphoserine" evidence="4">
    <location>
        <position position="37"/>
    </location>
</feature>
<feature type="lipid moiety-binding region" description="S-palmitoyl cysteine" evidence="1">
    <location>
        <position position="133"/>
    </location>
</feature>
<feature type="lipid moiety-binding region" description="S-palmitoyl cysteine" evidence="1">
    <location>
        <position position="143"/>
    </location>
</feature>
<feature type="lipid moiety-binding region" description="S-palmitoyl cysteine" evidence="1">
    <location>
        <position position="156"/>
    </location>
</feature>
<feature type="cross-link" description="Glycyl lysine isopeptide (Lys-Gly) (interchain with G-Cter in ubiquitin); alternate" evidence="4">
    <location>
        <position position="5"/>
    </location>
</feature>
<feature type="cross-link" description="Glycyl lysine isopeptide (Lys-Gly) (interchain with G-Cter in ubiquitin)" evidence="4">
    <location>
        <position position="26"/>
    </location>
</feature>
<feature type="cross-link" description="Glycyl lysine isopeptide (Lys-Gly) (interchain with G-Cter in ubiquitin)" evidence="4">
    <location>
        <position position="30"/>
    </location>
</feature>
<feature type="cross-link" description="Glycyl lysine isopeptide (Lys-Gly) (interchain with G-Cter in ubiquitin)" evidence="4">
    <location>
        <position position="39"/>
    </location>
</feature>
<feature type="cross-link" description="Glycyl lysine isopeptide (Lys-Gly) (interchain with G-Cter in ubiquitin)" evidence="4">
    <location>
        <position position="47"/>
    </location>
</feature>
<feature type="cross-link" description="Glycyl lysine isopeptide (Lys-Gly) (interchain with G-Cter in ubiquitin)" evidence="4">
    <location>
        <position position="57"/>
    </location>
</feature>
<organism>
    <name type="scientific">Saimiri boliviensis boliviensis</name>
    <name type="common">Bolivian squirrel monkey</name>
    <dbReference type="NCBI Taxonomy" id="39432"/>
    <lineage>
        <taxon>Eukaryota</taxon>
        <taxon>Metazoa</taxon>
        <taxon>Chordata</taxon>
        <taxon>Craniata</taxon>
        <taxon>Vertebrata</taxon>
        <taxon>Euteleostomi</taxon>
        <taxon>Mammalia</taxon>
        <taxon>Eutheria</taxon>
        <taxon>Euarchontoglires</taxon>
        <taxon>Primates</taxon>
        <taxon>Haplorrhini</taxon>
        <taxon>Platyrrhini</taxon>
        <taxon>Cebidae</taxon>
        <taxon>Saimiriinae</taxon>
        <taxon>Saimiri</taxon>
    </lineage>
</organism>
<evidence type="ECO:0000250" key="1"/>
<evidence type="ECO:0000250" key="2">
    <source>
        <dbReference type="UniProtKB" id="P41350"/>
    </source>
</evidence>
<evidence type="ECO:0000250" key="3">
    <source>
        <dbReference type="UniProtKB" id="P49817"/>
    </source>
</evidence>
<evidence type="ECO:0000250" key="4">
    <source>
        <dbReference type="UniProtKB" id="Q03135"/>
    </source>
</evidence>
<evidence type="ECO:0000250" key="5">
    <source>
        <dbReference type="UniProtKB" id="Q2IBA5"/>
    </source>
</evidence>
<evidence type="ECO:0000255" key="6"/>
<evidence type="ECO:0000305" key="7"/>
<sequence length="178" mass="20443">MSGGKYVDSEGHLYTVPIREQGNIYKPNNKAMADELSEKQVYDAHTKEIDLVNRDPKHLNDDVVKIDFEDVIAEPEGTHSFDGIWKASFTTFTVTKYWFYRLLSALFGIPMALIWGIYFAILSFLHIWAVVPCIKSFLIEIQCISRVYSIYIHTVCDPLFEAIGKIFSNVRIGLQKEI</sequence>
<comment type="function">
    <text evidence="3 4">May act as a scaffolding protein within caveolar membranes. Forms a stable heterooligomeric complex with CAV2 that targets to lipid rafts and drives caveolae formation. Mediates the recruitment of CAVIN proteins (CAVIN1/2/3/4) to the caveolae (By similarity). Interacts directly with G-protein alpha subunits and can functionally regulate their activity (By similarity). Involved in the costimulatory signal essential for T-cell receptor (TCR)-mediated T-cell activation. Its binding to DPP4 induces T-cell proliferation and NF-kappa-B activation in a T-cell receptor/CD3-dependent manner (By similarity). Recruits CTNNB1 to caveolar membranes and may regulate CTNNB1-mediated signaling through the Wnt pathway (By similarity). Negatively regulates TGFB1-mediated activation of SMAD2/3 by mediating the internalization of TGFBR1 from membrane rafts leading to its subsequent degradation (By similarity). Binds 20(S)-hydroxycholesterol (20(S)-OHC) (By similarity).</text>
</comment>
<comment type="subunit">
    <text evidence="2 3 4 5">Homooligomer. Interacts with GLIPR2. Interacts with NOSTRIN (By similarity). Interacts with SNAP25 and STX1A (By similarity). Interacts (via the N-terminus) with DPP4; the interaction is direct (By similarity). Interacts with CTNNB1, CDH1 and JUP. Interacts with PACSIN2; this interaction induces membrane tubulation (By similarity). Interacts with SLC7A9 (By similarity). Interacts with BMX and BTK. Interacts with TGFBR1. Interacts with CAVIN3 (via leucine-zipper domain) in a cholesterol-sensitive manner. Interacts with CAVIN1. Interacts with EHD2 in a cholesterol-dependent manner. Forms a ternary complex with UBXN6 and VCP; mediates CAV1 targeting to lysosomes for degradation. Interacts with ABCG1; this interaction regulates ABCG1-mediated cholesterol efflux (By similarity). Interacts with NEU3; this interaction enhances NEU3 sialidase activity within caveola. Interacts (via C-terminus) with SPRY1, SPRY2 (via C-terminus), SPRY3, and SPRY4 (By similarity). Interacts with IGFBP5; this interaction allows trafficking of IGFBP5 from the plasma membrane to the nucleus (By similarity).</text>
</comment>
<comment type="subcellular location">
    <subcellularLocation>
        <location evidence="1">Golgi apparatus membrane</location>
        <topology evidence="1">Peripheral membrane protein</topology>
    </subcellularLocation>
    <subcellularLocation>
        <location evidence="1">Cell membrane</location>
        <topology evidence="1">Peripheral membrane protein</topology>
    </subcellularLocation>
    <subcellularLocation>
        <location evidence="3">Membrane</location>
        <location evidence="3">Caveola</location>
        <topology evidence="1">Peripheral membrane protein</topology>
    </subcellularLocation>
    <subcellularLocation>
        <location evidence="4">Membrane raft</location>
    </subcellularLocation>
    <text evidence="1">Colocalized with DPP4 in membrane rafts. Potential hairpin-like structure in the membrane. Membrane protein of caveolae (By similarity).</text>
</comment>
<comment type="PTM">
    <text evidence="4">Phosphorylated at Tyr-14 by ABL1 in response to oxidative stress.</text>
</comment>
<comment type="PTM">
    <text evidence="4">Ubiquitinated. Undergo monoubiquitination and multi- and/or polyubiquitination. Monoubiquitination of N-terminal lysines promotes integration in a ternary complex with UBXN6 and VCP which promotes oligomeric CAV1 targeting to lysosomes for degradation. Ubiquitinated by ZNRF1; leading to degradation and modulation of the TLR4-mediated immune response.</text>
</comment>
<comment type="similarity">
    <text evidence="7">Belongs to the caveolin family.</text>
</comment>
<reference key="1">
    <citation type="submission" date="2006-09" db="EMBL/GenBank/DDBJ databases">
        <title>NISC comparative sequencing initiative.</title>
        <authorList>
            <person name="Antonellis A."/>
            <person name="Ayele K."/>
            <person name="Benjamin B."/>
            <person name="Blakesley R.W."/>
            <person name="Boakye A."/>
            <person name="Bouffard G.G."/>
            <person name="Brinkley C."/>
            <person name="Brooks S."/>
            <person name="Chu G."/>
            <person name="Coleman H."/>
            <person name="Engle J."/>
            <person name="Gestole M."/>
            <person name="Greene A."/>
            <person name="Guan X."/>
            <person name="Gupta J."/>
            <person name="Haghighi P."/>
            <person name="Han J."/>
            <person name="Hansen N."/>
            <person name="Ho S.-L."/>
            <person name="Hu P."/>
            <person name="Hunter G."/>
            <person name="Hurle B."/>
            <person name="Idol J.R."/>
            <person name="Kwong P."/>
            <person name="Laric P."/>
            <person name="Larson S."/>
            <person name="Lee-Lin S.-Q."/>
            <person name="Legaspi R."/>
            <person name="Madden M."/>
            <person name="Maduro Q.L."/>
            <person name="Maduro V.B."/>
            <person name="Margulies E.H."/>
            <person name="Masiello C."/>
            <person name="Maskeri B."/>
            <person name="McDowell J."/>
            <person name="Mojidi H.A."/>
            <person name="Mullikin J.C."/>
            <person name="Oestreicher J.S."/>
            <person name="Park M."/>
            <person name="Portnoy M.E."/>
            <person name="Prasad A."/>
            <person name="Puri O."/>
            <person name="Reddix-Dugue N."/>
            <person name="Schandler K."/>
            <person name="Schueler M.G."/>
            <person name="Sison C."/>
            <person name="Stantripop S."/>
            <person name="Stephen E."/>
            <person name="Taye A."/>
            <person name="Thomas J.W."/>
            <person name="Thomas P.J."/>
            <person name="Tsipouri V."/>
            <person name="Ung L."/>
            <person name="Vogt J.L."/>
            <person name="Wetherby K.D."/>
            <person name="Young A."/>
            <person name="Green E.D."/>
        </authorList>
    </citation>
    <scope>NUCLEOTIDE SEQUENCE [LARGE SCALE GENOMIC DNA]</scope>
</reference>
<dbReference type="EMBL" id="DP000180">
    <property type="protein sequence ID" value="ABI75302.1"/>
    <property type="molecule type" value="Genomic_DNA"/>
</dbReference>
<dbReference type="RefSeq" id="XP_003921109.1">
    <property type="nucleotide sequence ID" value="XM_003921060.3"/>
</dbReference>
<dbReference type="SMR" id="Q09YH8"/>
<dbReference type="STRING" id="39432.ENSSBOP00000026786"/>
<dbReference type="GeneID" id="101039198"/>
<dbReference type="KEGG" id="sbq:101039198"/>
<dbReference type="CTD" id="857"/>
<dbReference type="OrthoDB" id="57680at9443"/>
<dbReference type="Proteomes" id="UP000233220">
    <property type="component" value="Whole Genome Shotgun Assembly"/>
</dbReference>
<dbReference type="GO" id="GO:0005901">
    <property type="term" value="C:caveola"/>
    <property type="evidence" value="ECO:0000250"/>
    <property type="project" value="UniProtKB"/>
</dbReference>
<dbReference type="GO" id="GO:0005768">
    <property type="term" value="C:endosome"/>
    <property type="evidence" value="ECO:0000250"/>
    <property type="project" value="UniProtKB"/>
</dbReference>
<dbReference type="GO" id="GO:0005925">
    <property type="term" value="C:focal adhesion"/>
    <property type="evidence" value="ECO:0007669"/>
    <property type="project" value="TreeGrafter"/>
</dbReference>
<dbReference type="GO" id="GO:0000139">
    <property type="term" value="C:Golgi membrane"/>
    <property type="evidence" value="ECO:0007669"/>
    <property type="project" value="UniProtKB-SubCell"/>
</dbReference>
<dbReference type="GO" id="GO:0045121">
    <property type="term" value="C:membrane raft"/>
    <property type="evidence" value="ECO:0000250"/>
    <property type="project" value="UniProtKB"/>
</dbReference>
<dbReference type="GO" id="GO:0048471">
    <property type="term" value="C:perinuclear region of cytoplasm"/>
    <property type="evidence" value="ECO:0007669"/>
    <property type="project" value="TreeGrafter"/>
</dbReference>
<dbReference type="GO" id="GO:0042383">
    <property type="term" value="C:sarcolemma"/>
    <property type="evidence" value="ECO:0007669"/>
    <property type="project" value="TreeGrafter"/>
</dbReference>
<dbReference type="GO" id="GO:0060090">
    <property type="term" value="F:molecular adaptor activity"/>
    <property type="evidence" value="ECO:0007669"/>
    <property type="project" value="TreeGrafter"/>
</dbReference>
<dbReference type="GO" id="GO:0008142">
    <property type="term" value="F:oxysterol binding"/>
    <property type="evidence" value="ECO:0000250"/>
    <property type="project" value="UniProtKB"/>
</dbReference>
<dbReference type="GO" id="GO:0019901">
    <property type="term" value="F:protein kinase binding"/>
    <property type="evidence" value="ECO:0007669"/>
    <property type="project" value="TreeGrafter"/>
</dbReference>
<dbReference type="GO" id="GO:0044325">
    <property type="term" value="F:transmembrane transporter binding"/>
    <property type="evidence" value="ECO:0007669"/>
    <property type="project" value="TreeGrafter"/>
</dbReference>
<dbReference type="GO" id="GO:0070836">
    <property type="term" value="P:caveola assembly"/>
    <property type="evidence" value="ECO:0007669"/>
    <property type="project" value="InterPro"/>
</dbReference>
<dbReference type="GO" id="GO:0030154">
    <property type="term" value="P:cell differentiation"/>
    <property type="evidence" value="ECO:0007669"/>
    <property type="project" value="TreeGrafter"/>
</dbReference>
<dbReference type="GO" id="GO:0001937">
    <property type="term" value="P:negative regulation of endothelial cell proliferation"/>
    <property type="evidence" value="ECO:0007669"/>
    <property type="project" value="TreeGrafter"/>
</dbReference>
<dbReference type="GO" id="GO:0031623">
    <property type="term" value="P:receptor internalization"/>
    <property type="evidence" value="ECO:0000250"/>
    <property type="project" value="UniProtKB"/>
</dbReference>
<dbReference type="GO" id="GO:0051480">
    <property type="term" value="P:regulation of cytosolic calcium ion concentration"/>
    <property type="evidence" value="ECO:0007669"/>
    <property type="project" value="TreeGrafter"/>
</dbReference>
<dbReference type="GO" id="GO:0031295">
    <property type="term" value="P:T cell costimulation"/>
    <property type="evidence" value="ECO:0000250"/>
    <property type="project" value="UniProtKB"/>
</dbReference>
<dbReference type="InterPro" id="IPR001612">
    <property type="entry name" value="Caveolin"/>
</dbReference>
<dbReference type="InterPro" id="IPR018361">
    <property type="entry name" value="Caveolin_CS"/>
</dbReference>
<dbReference type="PANTHER" id="PTHR10844">
    <property type="entry name" value="CAVEOLIN"/>
    <property type="match status" value="1"/>
</dbReference>
<dbReference type="PANTHER" id="PTHR10844:SF18">
    <property type="entry name" value="CAVEOLIN-1"/>
    <property type="match status" value="1"/>
</dbReference>
<dbReference type="Pfam" id="PF01146">
    <property type="entry name" value="Caveolin"/>
    <property type="match status" value="1"/>
</dbReference>
<dbReference type="PROSITE" id="PS01210">
    <property type="entry name" value="CAVEOLIN"/>
    <property type="match status" value="1"/>
</dbReference>